<feature type="chain" id="PRO_1000098379" description="Methionyl-tRNA formyltransferase">
    <location>
        <begin position="1"/>
        <end position="309"/>
    </location>
</feature>
<feature type="binding site" evidence="1">
    <location>
        <begin position="107"/>
        <end position="110"/>
    </location>
    <ligand>
        <name>(6S)-5,6,7,8-tetrahydrofolate</name>
        <dbReference type="ChEBI" id="CHEBI:57453"/>
    </ligand>
</feature>
<reference key="1">
    <citation type="submission" date="2004-12" db="EMBL/GenBank/DDBJ databases">
        <title>The genome sequence of Borrelia hermsii and Borrelia turicatae: comparative analysis of two agents of endemic N. America relapsing fever.</title>
        <authorList>
            <person name="Porcella S.F."/>
            <person name="Raffel S.J."/>
            <person name="Schrumpf M.E."/>
            <person name="Montgomery B."/>
            <person name="Smith T."/>
            <person name="Schwan T.G."/>
        </authorList>
    </citation>
    <scope>NUCLEOTIDE SEQUENCE [LARGE SCALE GENOMIC DNA]</scope>
    <source>
        <strain>HS1 / DAH</strain>
    </source>
</reference>
<comment type="function">
    <text evidence="1">Attaches a formyl group to the free amino group of methionyl-tRNA(fMet). The formyl group appears to play a dual role in the initiator identity of N-formylmethionyl-tRNA by promoting its recognition by IF2 and preventing the misappropriation of this tRNA by the elongation apparatus.</text>
</comment>
<comment type="catalytic activity">
    <reaction evidence="1">
        <text>L-methionyl-tRNA(fMet) + (6R)-10-formyltetrahydrofolate = N-formyl-L-methionyl-tRNA(fMet) + (6S)-5,6,7,8-tetrahydrofolate + H(+)</text>
        <dbReference type="Rhea" id="RHEA:24380"/>
        <dbReference type="Rhea" id="RHEA-COMP:9952"/>
        <dbReference type="Rhea" id="RHEA-COMP:9953"/>
        <dbReference type="ChEBI" id="CHEBI:15378"/>
        <dbReference type="ChEBI" id="CHEBI:57453"/>
        <dbReference type="ChEBI" id="CHEBI:78530"/>
        <dbReference type="ChEBI" id="CHEBI:78844"/>
        <dbReference type="ChEBI" id="CHEBI:195366"/>
        <dbReference type="EC" id="2.1.2.9"/>
    </reaction>
</comment>
<comment type="similarity">
    <text evidence="1">Belongs to the Fmt family.</text>
</comment>
<protein>
    <recommendedName>
        <fullName evidence="1">Methionyl-tRNA formyltransferase</fullName>
        <ecNumber evidence="1">2.1.2.9</ecNumber>
    </recommendedName>
</protein>
<evidence type="ECO:0000255" key="1">
    <source>
        <dbReference type="HAMAP-Rule" id="MF_00182"/>
    </source>
</evidence>
<name>FMT_BORHD</name>
<dbReference type="EC" id="2.1.2.9" evidence="1"/>
<dbReference type="EMBL" id="CP000048">
    <property type="protein sequence ID" value="AAX16586.1"/>
    <property type="molecule type" value="Genomic_DNA"/>
</dbReference>
<dbReference type="RefSeq" id="WP_012421843.1">
    <property type="nucleotide sequence ID" value="NZ_CP073136.1"/>
</dbReference>
<dbReference type="SMR" id="B2S1P9"/>
<dbReference type="KEGG" id="bhr:BH0064"/>
<dbReference type="HOGENOM" id="CLU_033347_1_1_12"/>
<dbReference type="Proteomes" id="UP000008834">
    <property type="component" value="Chromosome"/>
</dbReference>
<dbReference type="GO" id="GO:0005829">
    <property type="term" value="C:cytosol"/>
    <property type="evidence" value="ECO:0007669"/>
    <property type="project" value="TreeGrafter"/>
</dbReference>
<dbReference type="GO" id="GO:0004479">
    <property type="term" value="F:methionyl-tRNA formyltransferase activity"/>
    <property type="evidence" value="ECO:0007669"/>
    <property type="project" value="UniProtKB-UniRule"/>
</dbReference>
<dbReference type="CDD" id="cd08646">
    <property type="entry name" value="FMT_core_Met-tRNA-FMT_N"/>
    <property type="match status" value="1"/>
</dbReference>
<dbReference type="CDD" id="cd08704">
    <property type="entry name" value="Met_tRNA_FMT_C"/>
    <property type="match status" value="1"/>
</dbReference>
<dbReference type="Gene3D" id="3.10.25.10">
    <property type="entry name" value="Formyl transferase, C-terminal domain"/>
    <property type="match status" value="1"/>
</dbReference>
<dbReference type="Gene3D" id="3.40.50.170">
    <property type="entry name" value="Formyl transferase, N-terminal domain"/>
    <property type="match status" value="1"/>
</dbReference>
<dbReference type="HAMAP" id="MF_00182">
    <property type="entry name" value="Formyl_trans"/>
    <property type="match status" value="1"/>
</dbReference>
<dbReference type="InterPro" id="IPR005794">
    <property type="entry name" value="Fmt"/>
</dbReference>
<dbReference type="InterPro" id="IPR005793">
    <property type="entry name" value="Formyl_trans_C"/>
</dbReference>
<dbReference type="InterPro" id="IPR037022">
    <property type="entry name" value="Formyl_trans_C_sf"/>
</dbReference>
<dbReference type="InterPro" id="IPR002376">
    <property type="entry name" value="Formyl_transf_N"/>
</dbReference>
<dbReference type="InterPro" id="IPR036477">
    <property type="entry name" value="Formyl_transf_N_sf"/>
</dbReference>
<dbReference type="InterPro" id="IPR011034">
    <property type="entry name" value="Formyl_transferase-like_C_sf"/>
</dbReference>
<dbReference type="InterPro" id="IPR044135">
    <property type="entry name" value="Met-tRNA-FMT_C"/>
</dbReference>
<dbReference type="InterPro" id="IPR041711">
    <property type="entry name" value="Met-tRNA-FMT_N"/>
</dbReference>
<dbReference type="NCBIfam" id="TIGR00460">
    <property type="entry name" value="fmt"/>
    <property type="match status" value="1"/>
</dbReference>
<dbReference type="PANTHER" id="PTHR11138">
    <property type="entry name" value="METHIONYL-TRNA FORMYLTRANSFERASE"/>
    <property type="match status" value="1"/>
</dbReference>
<dbReference type="PANTHER" id="PTHR11138:SF5">
    <property type="entry name" value="METHIONYL-TRNA FORMYLTRANSFERASE, MITOCHONDRIAL"/>
    <property type="match status" value="1"/>
</dbReference>
<dbReference type="Pfam" id="PF02911">
    <property type="entry name" value="Formyl_trans_C"/>
    <property type="match status" value="1"/>
</dbReference>
<dbReference type="Pfam" id="PF00551">
    <property type="entry name" value="Formyl_trans_N"/>
    <property type="match status" value="1"/>
</dbReference>
<dbReference type="SUPFAM" id="SSF50486">
    <property type="entry name" value="FMT C-terminal domain-like"/>
    <property type="match status" value="1"/>
</dbReference>
<dbReference type="SUPFAM" id="SSF53328">
    <property type="entry name" value="Formyltransferase"/>
    <property type="match status" value="1"/>
</dbReference>
<gene>
    <name evidence="1" type="primary">fmt</name>
    <name type="ordered locus">BH0064</name>
</gene>
<accession>B2S1P9</accession>
<proteinExistence type="inferred from homology"/>
<organism>
    <name type="scientific">Borrelia hermsii (strain HS1 / DAH)</name>
    <dbReference type="NCBI Taxonomy" id="314723"/>
    <lineage>
        <taxon>Bacteria</taxon>
        <taxon>Pseudomonadati</taxon>
        <taxon>Spirochaetota</taxon>
        <taxon>Spirochaetia</taxon>
        <taxon>Spirochaetales</taxon>
        <taxon>Borreliaceae</taxon>
        <taxon>Borrelia</taxon>
    </lineage>
</organism>
<sequence length="309" mass="34697">MRIFFASSESIALEVLKKVADQHNVVGVLTAPDKPSGRGLFLRANDIKVEATNRNITVLDPVVLNSDVVEIVKRLNPDLMLVFSYGKIFRQEFLDIFPMGCINVHPSLLPKYRGPSPIQTAILNGDTVGGITVQKMALEMDSGNILSQSQFEIKSFNTSADIFRYVSLNSFNLVLEALSKLDKGNIGIEQDSRQATYCSFFNKQHRILDFNLSAFEIKNKINACNPWPLARAKLDDDEIIFHRADFIRTNDYSDQAIGKIILFDPSRGILVKTGDGILLLLELQRAGRKVMDYKSFYNGNRDLIGKIFS</sequence>
<keyword id="KW-0648">Protein biosynthesis</keyword>
<keyword id="KW-0808">Transferase</keyword>